<sequence>MESYIQNLFAERIGGKKFGKEDVIYKFEKIKRAKQEAMKRHPDMELIDMGVGEPDEMADPEVIRVLCEEAKKWENRGYADNGIQELKDAVPPYMEKVYGVKDIDPVNEVIHSIGSKPALAYITSAFINPGDVCLMTVPGYPVTATHTKWYGGEVYNLPLLEENDFLPDLESIPEDIKKRAKILYLNYPNNPTGAQATKKFYKEVVDFAFENEVIVVQDAAYGALVYDGKPLSFLSVKDAKEVGVEIHSFSKAFNMTGWRLAFLVGNELIIKAFATVKDNFDSGQFIPIQKAGIYCLQHPEITERVRQKYERRLRKMVKILNEVGFKARMPGGTFYLYVKSPTKANGIEFKTAEDFSQYLIKEKLISTVPWDDAGHYLRLAACFVAKDENGNPTTEEKYEDMVLEEFKRRLEGMDLEFE</sequence>
<proteinExistence type="evidence at protein level"/>
<accession>Q58786</accession>
<keyword id="KW-0032">Aminotransferase</keyword>
<keyword id="KW-0963">Cytoplasm</keyword>
<keyword id="KW-0663">Pyridoxal phosphate</keyword>
<keyword id="KW-1185">Reference proteome</keyword>
<keyword id="KW-0808">Transferase</keyword>
<dbReference type="EC" id="2.6.1.83" evidence="2"/>
<dbReference type="EMBL" id="L77117">
    <property type="protein sequence ID" value="AAB99401.1"/>
    <property type="molecule type" value="Genomic_DNA"/>
</dbReference>
<dbReference type="PIR" id="F64473">
    <property type="entry name" value="F64473"/>
</dbReference>
<dbReference type="RefSeq" id="WP_010870908.1">
    <property type="nucleotide sequence ID" value="NC_000909.1"/>
</dbReference>
<dbReference type="SMR" id="Q58786"/>
<dbReference type="FunCoup" id="Q58786">
    <property type="interactions" value="97"/>
</dbReference>
<dbReference type="STRING" id="243232.MJ_1391"/>
<dbReference type="PaxDb" id="243232-MJ_1391"/>
<dbReference type="EnsemblBacteria" id="AAB99401">
    <property type="protein sequence ID" value="AAB99401"/>
    <property type="gene ID" value="MJ_1391"/>
</dbReference>
<dbReference type="GeneID" id="1452294"/>
<dbReference type="KEGG" id="mja:MJ_1391"/>
<dbReference type="eggNOG" id="arCOG01133">
    <property type="taxonomic scope" value="Archaea"/>
</dbReference>
<dbReference type="HOGENOM" id="CLU_017584_4_5_2"/>
<dbReference type="InParanoid" id="Q58786"/>
<dbReference type="OrthoDB" id="372018at2157"/>
<dbReference type="PhylomeDB" id="Q58786"/>
<dbReference type="BioCyc" id="MetaCyc:MONOMER-15639"/>
<dbReference type="UniPathway" id="UPA00034">
    <property type="reaction ID" value="UER00466"/>
</dbReference>
<dbReference type="Proteomes" id="UP000000805">
    <property type="component" value="Chromosome"/>
</dbReference>
<dbReference type="GO" id="GO:0005737">
    <property type="term" value="C:cytoplasm"/>
    <property type="evidence" value="ECO:0007669"/>
    <property type="project" value="UniProtKB-SubCell"/>
</dbReference>
<dbReference type="GO" id="GO:0010285">
    <property type="term" value="F:L,L-diaminopimelate aminotransferase activity"/>
    <property type="evidence" value="ECO:0000314"/>
    <property type="project" value="UniProtKB"/>
</dbReference>
<dbReference type="GO" id="GO:0030170">
    <property type="term" value="F:pyridoxal phosphate binding"/>
    <property type="evidence" value="ECO:0000314"/>
    <property type="project" value="UniProtKB"/>
</dbReference>
<dbReference type="GO" id="GO:0033362">
    <property type="term" value="P:lysine biosynthetic process via diaminopimelate, diaminopimelate-aminotransferase pathway"/>
    <property type="evidence" value="ECO:0000250"/>
    <property type="project" value="UniProtKB"/>
</dbReference>
<dbReference type="CDD" id="cd00609">
    <property type="entry name" value="AAT_like"/>
    <property type="match status" value="1"/>
</dbReference>
<dbReference type="Gene3D" id="3.90.1150.10">
    <property type="entry name" value="Aspartate Aminotransferase, domain 1"/>
    <property type="match status" value="1"/>
</dbReference>
<dbReference type="Gene3D" id="3.40.640.10">
    <property type="entry name" value="Type I PLP-dependent aspartate aminotransferase-like (Major domain)"/>
    <property type="match status" value="1"/>
</dbReference>
<dbReference type="InterPro" id="IPR004839">
    <property type="entry name" value="Aminotransferase_I/II_large"/>
</dbReference>
<dbReference type="InterPro" id="IPR050881">
    <property type="entry name" value="LL-DAP_aminotransferase"/>
</dbReference>
<dbReference type="InterPro" id="IPR004838">
    <property type="entry name" value="NHTrfase_class1_PyrdxlP-BS"/>
</dbReference>
<dbReference type="InterPro" id="IPR015424">
    <property type="entry name" value="PyrdxlP-dep_Trfase"/>
</dbReference>
<dbReference type="InterPro" id="IPR015421">
    <property type="entry name" value="PyrdxlP-dep_Trfase_major"/>
</dbReference>
<dbReference type="InterPro" id="IPR015422">
    <property type="entry name" value="PyrdxlP-dep_Trfase_small"/>
</dbReference>
<dbReference type="NCBIfam" id="NF004937">
    <property type="entry name" value="PRK06290.1"/>
    <property type="match status" value="1"/>
</dbReference>
<dbReference type="PANTHER" id="PTHR42832">
    <property type="entry name" value="AMINO ACID AMINOTRANSFERASE"/>
    <property type="match status" value="1"/>
</dbReference>
<dbReference type="PANTHER" id="PTHR42832:SF3">
    <property type="entry name" value="L-GLUTAMINE--4-(METHYLSULFANYL)-2-OXOBUTANOATE AMINOTRANSFERASE"/>
    <property type="match status" value="1"/>
</dbReference>
<dbReference type="Pfam" id="PF00155">
    <property type="entry name" value="Aminotran_1_2"/>
    <property type="match status" value="1"/>
</dbReference>
<dbReference type="SUPFAM" id="SSF53383">
    <property type="entry name" value="PLP-dependent transferases"/>
    <property type="match status" value="1"/>
</dbReference>
<dbReference type="PROSITE" id="PS00105">
    <property type="entry name" value="AA_TRANSFER_CLASS_1"/>
    <property type="match status" value="1"/>
</dbReference>
<reference key="1">
    <citation type="journal article" date="1996" name="Science">
        <title>Complete genome sequence of the methanogenic archaeon, Methanococcus jannaschii.</title>
        <authorList>
            <person name="Bult C.J."/>
            <person name="White O."/>
            <person name="Olsen G.J."/>
            <person name="Zhou L."/>
            <person name="Fleischmann R.D."/>
            <person name="Sutton G.G."/>
            <person name="Blake J.A."/>
            <person name="FitzGerald L.M."/>
            <person name="Clayton R.A."/>
            <person name="Gocayne J.D."/>
            <person name="Kerlavage A.R."/>
            <person name="Dougherty B.A."/>
            <person name="Tomb J.-F."/>
            <person name="Adams M.D."/>
            <person name="Reich C.I."/>
            <person name="Overbeek R."/>
            <person name="Kirkness E.F."/>
            <person name="Weinstock K.G."/>
            <person name="Merrick J.M."/>
            <person name="Glodek A."/>
            <person name="Scott J.L."/>
            <person name="Geoghagen N.S.M."/>
            <person name="Weidman J.F."/>
            <person name="Fuhrmann J.L."/>
            <person name="Nguyen D."/>
            <person name="Utterback T.R."/>
            <person name="Kelley J.M."/>
            <person name="Peterson J.D."/>
            <person name="Sadow P.W."/>
            <person name="Hanna M.C."/>
            <person name="Cotton M.D."/>
            <person name="Roberts K.M."/>
            <person name="Hurst M.A."/>
            <person name="Kaine B.P."/>
            <person name="Borodovsky M."/>
            <person name="Klenk H.-P."/>
            <person name="Fraser C.M."/>
            <person name="Smith H.O."/>
            <person name="Woese C.R."/>
            <person name="Venter J.C."/>
        </authorList>
    </citation>
    <scope>NUCLEOTIDE SEQUENCE [LARGE SCALE GENOMIC DNA]</scope>
    <source>
        <strain>ATCC 43067 / DSM 2661 / JAL-1 / JCM 10045 / NBRC 100440</strain>
    </source>
</reference>
<reference key="2">
    <citation type="journal article" date="2010" name="J. Bacteriol.">
        <title>Methanococci use the diaminopimelate aminotransferase (DapL) pathway for lysine biosynthesis.</title>
        <authorList>
            <person name="Liu Y."/>
            <person name="White R.H."/>
            <person name="Whitman W.B."/>
        </authorList>
    </citation>
    <scope>FUNCTION AS A DIAMINOPIMELATE AMINOTRANSFERASE</scope>
    <scope>CATALYTIC ACTIVITY</scope>
    <scope>BIOPHYSICOCHEMICAL PROPERTIES</scope>
    <scope>COFACTOR</scope>
</reference>
<feature type="chain" id="PRO_0000123929" description="LL-diaminopimelate aminotransferase">
    <location>
        <begin position="1"/>
        <end position="418"/>
    </location>
</feature>
<feature type="binding site" evidence="1">
    <location>
        <position position="25"/>
    </location>
    <ligand>
        <name>substrate</name>
    </ligand>
</feature>
<feature type="binding site" evidence="1">
    <location>
        <position position="52"/>
    </location>
    <ligand>
        <name>substrate</name>
    </ligand>
</feature>
<feature type="binding site" evidence="1">
    <location>
        <position position="78"/>
    </location>
    <ligand>
        <name>pyridoxal 5'-phosphate</name>
        <dbReference type="ChEBI" id="CHEBI:597326"/>
    </ligand>
</feature>
<feature type="binding site" evidence="1">
    <location>
        <begin position="115"/>
        <end position="116"/>
    </location>
    <ligand>
        <name>pyridoxal 5'-phosphate</name>
        <dbReference type="ChEBI" id="CHEBI:597326"/>
    </ligand>
</feature>
<feature type="binding site" evidence="1">
    <location>
        <position position="116"/>
    </location>
    <ligand>
        <name>substrate</name>
    </ligand>
</feature>
<feature type="binding site" evidence="1">
    <location>
        <position position="140"/>
    </location>
    <ligand>
        <name>pyridoxal 5'-phosphate</name>
        <dbReference type="ChEBI" id="CHEBI:597326"/>
    </ligand>
</feature>
<feature type="binding site" evidence="1">
    <location>
        <position position="140"/>
    </location>
    <ligand>
        <name>substrate</name>
    </ligand>
</feature>
<feature type="binding site" evidence="1">
    <location>
        <position position="190"/>
    </location>
    <ligand>
        <name>pyridoxal 5'-phosphate</name>
        <dbReference type="ChEBI" id="CHEBI:597326"/>
    </ligand>
</feature>
<feature type="binding site" evidence="1">
    <location>
        <position position="190"/>
    </location>
    <ligand>
        <name>substrate</name>
    </ligand>
</feature>
<feature type="binding site" evidence="1">
    <location>
        <position position="221"/>
    </location>
    <ligand>
        <name>pyridoxal 5'-phosphate</name>
        <dbReference type="ChEBI" id="CHEBI:597326"/>
    </ligand>
</feature>
<feature type="binding site" evidence="1">
    <location>
        <begin position="248"/>
        <end position="250"/>
    </location>
    <ligand>
        <name>pyridoxal 5'-phosphate</name>
        <dbReference type="ChEBI" id="CHEBI:597326"/>
    </ligand>
</feature>
<feature type="binding site" evidence="1">
    <location>
        <position position="259"/>
    </location>
    <ligand>
        <name>pyridoxal 5'-phosphate</name>
        <dbReference type="ChEBI" id="CHEBI:597326"/>
    </ligand>
</feature>
<feature type="modified residue" description="N6-(pyridoxal phosphate)lysine" evidence="1">
    <location>
        <position position="251"/>
    </location>
</feature>
<name>DAPAT_METJA</name>
<organism>
    <name type="scientific">Methanocaldococcus jannaschii (strain ATCC 43067 / DSM 2661 / JAL-1 / JCM 10045 / NBRC 100440)</name>
    <name type="common">Methanococcus jannaschii</name>
    <dbReference type="NCBI Taxonomy" id="243232"/>
    <lineage>
        <taxon>Archaea</taxon>
        <taxon>Methanobacteriati</taxon>
        <taxon>Methanobacteriota</taxon>
        <taxon>Methanomada group</taxon>
        <taxon>Methanococci</taxon>
        <taxon>Methanococcales</taxon>
        <taxon>Methanocaldococcaceae</taxon>
        <taxon>Methanocaldococcus</taxon>
    </lineage>
</organism>
<evidence type="ECO:0000250" key="1">
    <source>
        <dbReference type="UniProtKB" id="O84395"/>
    </source>
</evidence>
<evidence type="ECO:0000269" key="2">
    <source>
    </source>
</evidence>
<evidence type="ECO:0000303" key="3">
    <source>
    </source>
</evidence>
<evidence type="ECO:0000305" key="4"/>
<gene>
    <name type="primary">dapL</name>
    <name type="ordered locus">MJ1391</name>
</gene>
<protein>
    <recommendedName>
        <fullName evidence="3">LL-diaminopimelate aminotransferase</fullName>
        <shortName evidence="3">DAP-AT</shortName>
        <shortName evidence="3">DAP-aminotransferase</shortName>
        <shortName evidence="3">LL-DAP-aminotransferase</shortName>
        <ecNumber evidence="2">2.6.1.83</ecNumber>
    </recommendedName>
</protein>
<comment type="function">
    <text evidence="2">Involved in the synthesis of meso-diaminopimelate (m-DAP or DL-DAP), required for both lysine and peptidoglycan biosynthesis. Catalyzes the direct conversion of tetrahydrodipicolinate to LL-diaminopimelate, a reaction that requires three enzymes in E.coli.</text>
</comment>
<comment type="catalytic activity">
    <reaction evidence="2">
        <text>(2S,6S)-2,6-diaminopimelate + 2-oxoglutarate = (S)-2,3,4,5-tetrahydrodipicolinate + L-glutamate + H2O + H(+)</text>
        <dbReference type="Rhea" id="RHEA:23988"/>
        <dbReference type="ChEBI" id="CHEBI:15377"/>
        <dbReference type="ChEBI" id="CHEBI:15378"/>
        <dbReference type="ChEBI" id="CHEBI:16810"/>
        <dbReference type="ChEBI" id="CHEBI:16845"/>
        <dbReference type="ChEBI" id="CHEBI:29985"/>
        <dbReference type="ChEBI" id="CHEBI:57609"/>
        <dbReference type="EC" id="2.6.1.83"/>
    </reaction>
</comment>
<comment type="cofactor">
    <cofactor evidence="2">
        <name>pyridoxal 5'-phosphate</name>
        <dbReference type="ChEBI" id="CHEBI:597326"/>
    </cofactor>
</comment>
<comment type="biophysicochemical properties">
    <kinetics>
        <KM evidence="2">0.42 uM for alpha-ketoglutarate (alpha-KG)(at pH 8.8 and at 70 degrees Celsius)</KM>
        <KM evidence="2">82.8 uM for LL-2,6-diaminopimelate (L,L-DAP)(at pH 8.8 and at 70 degrees Celsius)</KM>
        <Vmax evidence="2">0.39 umol/min/mg enzyme (at pH 8.8 and at 70 degrees Celsius)</Vmax>
    </kinetics>
    <phDependence>
        <text evidence="2">Optimum pH is 8.5. About 40% and 50% of the maximum activity are observed at pH 7.0 and 10.0, respectively.</text>
    </phDependence>
    <temperatureDependence>
        <text evidence="2">Optimum temperature is 70 degrees Celsius. No activity is detected at temperatures below 45 degrees Celsius. At 85 degrees Celsius, the activity is 85% of the maximum activity.</text>
    </temperatureDependence>
</comment>
<comment type="pathway">
    <text evidence="4">Amino-acid biosynthesis; L-lysine biosynthesis via DAP pathway; LL-2,6-diaminopimelate from (S)-tetrahydrodipicolinate (aminotransferase route): step 1/1.</text>
</comment>
<comment type="subunit">
    <text evidence="1">Homodimer.</text>
</comment>
<comment type="subcellular location">
    <subcellularLocation>
        <location evidence="4">Cytoplasm</location>
    </subcellularLocation>
</comment>
<comment type="similarity">
    <text evidence="4">Belongs to the class-I pyridoxal-phosphate-dependent aminotransferase family.</text>
</comment>